<evidence type="ECO:0000255" key="1">
    <source>
        <dbReference type="HAMAP-Rule" id="MF_01351"/>
    </source>
</evidence>
<evidence type="ECO:0000256" key="2">
    <source>
        <dbReference type="SAM" id="MobiDB-lite"/>
    </source>
</evidence>
<accession>C4LB38</accession>
<name>NUOI_TOLAT</name>
<sequence length="180" mass="20311">MNIKQIVQGVGTQLRSLAMVFSHSFRPRDTLCYPEEKVPLAPRYRGRIVLTRDPDGDERCVACNLCAVACPVGCISLQKAERVDGRWYPEFFRINFSRCIFCGLCEEACPTTAIQLTPDFEMGEYRRQDLVYEKEDLLISGPGKYPDYNFYRVSGMSIDGKPKGSAQKEAAPIDVKSILP</sequence>
<comment type="function">
    <text evidence="1">NDH-1 shuttles electrons from NADH, via FMN and iron-sulfur (Fe-S) centers, to quinones in the respiratory chain. The immediate electron acceptor for the enzyme in this species is believed to be ubiquinone. Couples the redox reaction to proton translocation (for every two electrons transferred, four hydrogen ions are translocated across the cytoplasmic membrane), and thus conserves the redox energy in a proton gradient.</text>
</comment>
<comment type="catalytic activity">
    <reaction evidence="1">
        <text>a quinone + NADH + 5 H(+)(in) = a quinol + NAD(+) + 4 H(+)(out)</text>
        <dbReference type="Rhea" id="RHEA:57888"/>
        <dbReference type="ChEBI" id="CHEBI:15378"/>
        <dbReference type="ChEBI" id="CHEBI:24646"/>
        <dbReference type="ChEBI" id="CHEBI:57540"/>
        <dbReference type="ChEBI" id="CHEBI:57945"/>
        <dbReference type="ChEBI" id="CHEBI:132124"/>
    </reaction>
</comment>
<comment type="cofactor">
    <cofactor evidence="1">
        <name>[4Fe-4S] cluster</name>
        <dbReference type="ChEBI" id="CHEBI:49883"/>
    </cofactor>
    <text evidence="1">Binds 2 [4Fe-4S] clusters per subunit.</text>
</comment>
<comment type="subunit">
    <text evidence="1">NDH-1 is composed of 14 different subunits. Subunits NuoA, H, J, K, L, M, N constitute the membrane sector of the complex.</text>
</comment>
<comment type="subcellular location">
    <subcellularLocation>
        <location evidence="1">Cell inner membrane</location>
        <topology evidence="1">Peripheral membrane protein</topology>
    </subcellularLocation>
</comment>
<comment type="similarity">
    <text evidence="1">Belongs to the complex I 23 kDa subunit family.</text>
</comment>
<proteinExistence type="inferred from homology"/>
<reference key="1">
    <citation type="submission" date="2009-05" db="EMBL/GenBank/DDBJ databases">
        <title>Complete sequence of Tolumonas auensis DSM 9187.</title>
        <authorList>
            <consortium name="US DOE Joint Genome Institute"/>
            <person name="Lucas S."/>
            <person name="Copeland A."/>
            <person name="Lapidus A."/>
            <person name="Glavina del Rio T."/>
            <person name="Tice H."/>
            <person name="Bruce D."/>
            <person name="Goodwin L."/>
            <person name="Pitluck S."/>
            <person name="Chertkov O."/>
            <person name="Brettin T."/>
            <person name="Detter J.C."/>
            <person name="Han C."/>
            <person name="Larimer F."/>
            <person name="Land M."/>
            <person name="Hauser L."/>
            <person name="Kyrpides N."/>
            <person name="Mikhailova N."/>
            <person name="Spring S."/>
            <person name="Beller H."/>
        </authorList>
    </citation>
    <scope>NUCLEOTIDE SEQUENCE [LARGE SCALE GENOMIC DNA]</scope>
    <source>
        <strain>DSM 9187 / NBRC 110442 / TA 4</strain>
    </source>
</reference>
<protein>
    <recommendedName>
        <fullName evidence="1">NADH-quinone oxidoreductase subunit I</fullName>
        <ecNumber evidence="1">7.1.1.-</ecNumber>
    </recommendedName>
    <alternativeName>
        <fullName evidence="1">NADH dehydrogenase I subunit I</fullName>
    </alternativeName>
    <alternativeName>
        <fullName evidence="1">NDH-1 subunit I</fullName>
    </alternativeName>
</protein>
<organism>
    <name type="scientific">Tolumonas auensis (strain DSM 9187 / NBRC 110442 / TA 4)</name>
    <dbReference type="NCBI Taxonomy" id="595494"/>
    <lineage>
        <taxon>Bacteria</taxon>
        <taxon>Pseudomonadati</taxon>
        <taxon>Pseudomonadota</taxon>
        <taxon>Gammaproteobacteria</taxon>
        <taxon>Aeromonadales</taxon>
        <taxon>Aeromonadaceae</taxon>
        <taxon>Tolumonas</taxon>
    </lineage>
</organism>
<gene>
    <name evidence="1" type="primary">nuoI</name>
    <name type="ordered locus">Tola_2647</name>
</gene>
<keyword id="KW-0004">4Fe-4S</keyword>
<keyword id="KW-0997">Cell inner membrane</keyword>
<keyword id="KW-1003">Cell membrane</keyword>
<keyword id="KW-0408">Iron</keyword>
<keyword id="KW-0411">Iron-sulfur</keyword>
<keyword id="KW-0472">Membrane</keyword>
<keyword id="KW-0479">Metal-binding</keyword>
<keyword id="KW-0520">NAD</keyword>
<keyword id="KW-0874">Quinone</keyword>
<keyword id="KW-1185">Reference proteome</keyword>
<keyword id="KW-0677">Repeat</keyword>
<keyword id="KW-1278">Translocase</keyword>
<keyword id="KW-0830">Ubiquinone</keyword>
<feature type="chain" id="PRO_1000214853" description="NADH-quinone oxidoreductase subunit I">
    <location>
        <begin position="1"/>
        <end position="180"/>
    </location>
</feature>
<feature type="domain" description="4Fe-4S ferredoxin-type 1" evidence="1">
    <location>
        <begin position="48"/>
        <end position="80"/>
    </location>
</feature>
<feature type="domain" description="4Fe-4S ferredoxin-type 2" evidence="1">
    <location>
        <begin position="90"/>
        <end position="119"/>
    </location>
</feature>
<feature type="region of interest" description="Disordered" evidence="2">
    <location>
        <begin position="160"/>
        <end position="180"/>
    </location>
</feature>
<feature type="binding site" evidence="1">
    <location>
        <position position="60"/>
    </location>
    <ligand>
        <name>[4Fe-4S] cluster</name>
        <dbReference type="ChEBI" id="CHEBI:49883"/>
        <label>1</label>
    </ligand>
</feature>
<feature type="binding site" evidence="1">
    <location>
        <position position="63"/>
    </location>
    <ligand>
        <name>[4Fe-4S] cluster</name>
        <dbReference type="ChEBI" id="CHEBI:49883"/>
        <label>1</label>
    </ligand>
</feature>
<feature type="binding site" evidence="1">
    <location>
        <position position="66"/>
    </location>
    <ligand>
        <name>[4Fe-4S] cluster</name>
        <dbReference type="ChEBI" id="CHEBI:49883"/>
        <label>1</label>
    </ligand>
</feature>
<feature type="binding site" evidence="1">
    <location>
        <position position="70"/>
    </location>
    <ligand>
        <name>[4Fe-4S] cluster</name>
        <dbReference type="ChEBI" id="CHEBI:49883"/>
        <label>2</label>
    </ligand>
</feature>
<feature type="binding site" evidence="1">
    <location>
        <position position="99"/>
    </location>
    <ligand>
        <name>[4Fe-4S] cluster</name>
        <dbReference type="ChEBI" id="CHEBI:49883"/>
        <label>2</label>
    </ligand>
</feature>
<feature type="binding site" evidence="1">
    <location>
        <position position="102"/>
    </location>
    <ligand>
        <name>[4Fe-4S] cluster</name>
        <dbReference type="ChEBI" id="CHEBI:49883"/>
        <label>2</label>
    </ligand>
</feature>
<feature type="binding site" evidence="1">
    <location>
        <position position="105"/>
    </location>
    <ligand>
        <name>[4Fe-4S] cluster</name>
        <dbReference type="ChEBI" id="CHEBI:49883"/>
        <label>2</label>
    </ligand>
</feature>
<feature type="binding site" evidence="1">
    <location>
        <position position="109"/>
    </location>
    <ligand>
        <name>[4Fe-4S] cluster</name>
        <dbReference type="ChEBI" id="CHEBI:49883"/>
        <label>1</label>
    </ligand>
</feature>
<dbReference type="EC" id="7.1.1.-" evidence="1"/>
<dbReference type="EMBL" id="CP001616">
    <property type="protein sequence ID" value="ACQ94241.1"/>
    <property type="molecule type" value="Genomic_DNA"/>
</dbReference>
<dbReference type="RefSeq" id="WP_015879690.1">
    <property type="nucleotide sequence ID" value="NC_012691.1"/>
</dbReference>
<dbReference type="SMR" id="C4LB38"/>
<dbReference type="STRING" id="595494.Tola_2647"/>
<dbReference type="KEGG" id="tau:Tola_2647"/>
<dbReference type="eggNOG" id="COG1143">
    <property type="taxonomic scope" value="Bacteria"/>
</dbReference>
<dbReference type="HOGENOM" id="CLU_067218_4_3_6"/>
<dbReference type="OrthoDB" id="9808559at2"/>
<dbReference type="Proteomes" id="UP000009073">
    <property type="component" value="Chromosome"/>
</dbReference>
<dbReference type="GO" id="GO:0005886">
    <property type="term" value="C:plasma membrane"/>
    <property type="evidence" value="ECO:0007669"/>
    <property type="project" value="UniProtKB-SubCell"/>
</dbReference>
<dbReference type="GO" id="GO:0051539">
    <property type="term" value="F:4 iron, 4 sulfur cluster binding"/>
    <property type="evidence" value="ECO:0007669"/>
    <property type="project" value="UniProtKB-KW"/>
</dbReference>
<dbReference type="GO" id="GO:0005506">
    <property type="term" value="F:iron ion binding"/>
    <property type="evidence" value="ECO:0007669"/>
    <property type="project" value="UniProtKB-UniRule"/>
</dbReference>
<dbReference type="GO" id="GO:0050136">
    <property type="term" value="F:NADH:ubiquinone reductase (non-electrogenic) activity"/>
    <property type="evidence" value="ECO:0007669"/>
    <property type="project" value="UniProtKB-UniRule"/>
</dbReference>
<dbReference type="GO" id="GO:0048038">
    <property type="term" value="F:quinone binding"/>
    <property type="evidence" value="ECO:0007669"/>
    <property type="project" value="UniProtKB-KW"/>
</dbReference>
<dbReference type="GO" id="GO:0009060">
    <property type="term" value="P:aerobic respiration"/>
    <property type="evidence" value="ECO:0007669"/>
    <property type="project" value="TreeGrafter"/>
</dbReference>
<dbReference type="FunFam" id="3.30.70.3270:FF:000002">
    <property type="entry name" value="NADH-quinone oxidoreductase subunit I"/>
    <property type="match status" value="1"/>
</dbReference>
<dbReference type="Gene3D" id="3.30.70.3270">
    <property type="match status" value="1"/>
</dbReference>
<dbReference type="HAMAP" id="MF_01351">
    <property type="entry name" value="NDH1_NuoI"/>
    <property type="match status" value="1"/>
</dbReference>
<dbReference type="InterPro" id="IPR017896">
    <property type="entry name" value="4Fe4S_Fe-S-bd"/>
</dbReference>
<dbReference type="InterPro" id="IPR017900">
    <property type="entry name" value="4Fe4S_Fe_S_CS"/>
</dbReference>
<dbReference type="InterPro" id="IPR010226">
    <property type="entry name" value="NADH_quinone_OxRdtase_chainI"/>
</dbReference>
<dbReference type="NCBIfam" id="TIGR01971">
    <property type="entry name" value="NuoI"/>
    <property type="match status" value="1"/>
</dbReference>
<dbReference type="NCBIfam" id="NF004536">
    <property type="entry name" value="PRK05888.1-1"/>
    <property type="match status" value="1"/>
</dbReference>
<dbReference type="PANTHER" id="PTHR10849:SF20">
    <property type="entry name" value="NADH DEHYDROGENASE [UBIQUINONE] IRON-SULFUR PROTEIN 8, MITOCHONDRIAL"/>
    <property type="match status" value="1"/>
</dbReference>
<dbReference type="PANTHER" id="PTHR10849">
    <property type="entry name" value="NADH DEHYDROGENASE UBIQUINONE IRON-SULFUR PROTEIN 8, MITOCHONDRIAL"/>
    <property type="match status" value="1"/>
</dbReference>
<dbReference type="Pfam" id="PF12838">
    <property type="entry name" value="Fer4_7"/>
    <property type="match status" value="1"/>
</dbReference>
<dbReference type="SUPFAM" id="SSF54862">
    <property type="entry name" value="4Fe-4S ferredoxins"/>
    <property type="match status" value="1"/>
</dbReference>
<dbReference type="PROSITE" id="PS00198">
    <property type="entry name" value="4FE4S_FER_1"/>
    <property type="match status" value="2"/>
</dbReference>
<dbReference type="PROSITE" id="PS51379">
    <property type="entry name" value="4FE4S_FER_2"/>
    <property type="match status" value="2"/>
</dbReference>